<organism>
    <name type="scientific">Salmonella typhimurium (strain LT2 / SGSC1412 / ATCC 700720)</name>
    <dbReference type="NCBI Taxonomy" id="99287"/>
    <lineage>
        <taxon>Bacteria</taxon>
        <taxon>Pseudomonadati</taxon>
        <taxon>Pseudomonadota</taxon>
        <taxon>Gammaproteobacteria</taxon>
        <taxon>Enterobacterales</taxon>
        <taxon>Enterobacteriaceae</taxon>
        <taxon>Salmonella</taxon>
    </lineage>
</organism>
<accession>Q8ZQ40</accession>
<keyword id="KW-0002">3D-structure</keyword>
<keyword id="KW-0285">Flavoprotein</keyword>
<keyword id="KW-0288">FMN</keyword>
<keyword id="KW-0520">NAD</keyword>
<keyword id="KW-0521">NADP</keyword>
<keyword id="KW-0547">Nucleotide-binding</keyword>
<keyword id="KW-0560">Oxidoreductase</keyword>
<keyword id="KW-1185">Reference proteome</keyword>
<feature type="initiator methionine" description="Removed" evidence="1">
    <location>
        <position position="1"/>
    </location>
</feature>
<feature type="chain" id="PRO_0000200757" description="NAD(P)H dehydrogenase (quinone)">
    <location>
        <begin position="2"/>
        <end position="198"/>
    </location>
</feature>
<feature type="domain" description="Flavodoxin-like" evidence="2">
    <location>
        <begin position="4"/>
        <end position="189"/>
    </location>
</feature>
<feature type="binding site" evidence="2">
    <location>
        <begin position="10"/>
        <end position="15"/>
    </location>
    <ligand>
        <name>FMN</name>
        <dbReference type="ChEBI" id="CHEBI:58210"/>
    </ligand>
</feature>
<feature type="binding site" evidence="2">
    <location>
        <position position="12"/>
    </location>
    <ligand>
        <name>NAD(+)</name>
        <dbReference type="ChEBI" id="CHEBI:57540"/>
    </ligand>
</feature>
<feature type="binding site" evidence="2">
    <location>
        <begin position="78"/>
        <end position="80"/>
    </location>
    <ligand>
        <name>FMN</name>
        <dbReference type="ChEBI" id="CHEBI:58210"/>
    </ligand>
</feature>
<feature type="binding site" evidence="2">
    <location>
        <position position="98"/>
    </location>
    <ligand>
        <name>substrate</name>
    </ligand>
</feature>
<feature type="binding site" evidence="2">
    <location>
        <begin position="113"/>
        <end position="118"/>
    </location>
    <ligand>
        <name>FMN</name>
        <dbReference type="ChEBI" id="CHEBI:58210"/>
    </ligand>
</feature>
<feature type="binding site" evidence="2">
    <location>
        <position position="133"/>
    </location>
    <ligand>
        <name>FMN</name>
        <dbReference type="ChEBI" id="CHEBI:58210"/>
    </ligand>
</feature>
<feature type="strand" evidence="3">
    <location>
        <begin position="2"/>
        <end position="8"/>
    </location>
</feature>
<feature type="strand" evidence="3">
    <location>
        <begin position="11"/>
        <end position="13"/>
    </location>
</feature>
<feature type="helix" evidence="3">
    <location>
        <begin position="14"/>
        <end position="26"/>
    </location>
</feature>
<feature type="strand" evidence="3">
    <location>
        <begin position="32"/>
        <end position="38"/>
    </location>
</feature>
<feature type="helix" evidence="3">
    <location>
        <begin position="45"/>
        <end position="50"/>
    </location>
</feature>
<feature type="helix" evidence="3">
    <location>
        <begin position="63"/>
        <end position="68"/>
    </location>
</feature>
<feature type="strand" evidence="3">
    <location>
        <begin position="70"/>
        <end position="79"/>
    </location>
</feature>
<feature type="helix" evidence="3">
    <location>
        <begin position="85"/>
        <end position="91"/>
    </location>
</feature>
<feature type="helix" evidence="3">
    <location>
        <begin position="95"/>
        <end position="99"/>
    </location>
</feature>
<feature type="turn" evidence="3">
    <location>
        <begin position="100"/>
        <end position="105"/>
    </location>
</feature>
<feature type="strand" evidence="3">
    <location>
        <begin position="107"/>
        <end position="117"/>
    </location>
</feature>
<feature type="helix" evidence="3">
    <location>
        <begin position="120"/>
        <end position="133"/>
    </location>
</feature>
<feature type="helix" evidence="3">
    <location>
        <begin position="146"/>
        <end position="149"/>
    </location>
</feature>
<feature type="strand" evidence="3">
    <location>
        <begin position="163"/>
        <end position="165"/>
    </location>
</feature>
<feature type="helix" evidence="3">
    <location>
        <begin position="176"/>
        <end position="195"/>
    </location>
</feature>
<name>NQOR_SALTY</name>
<proteinExistence type="evidence at protein level"/>
<gene>
    <name type="ordered locus">STM1119</name>
</gene>
<reference key="1">
    <citation type="journal article" date="2001" name="Nature">
        <title>Complete genome sequence of Salmonella enterica serovar Typhimurium LT2.</title>
        <authorList>
            <person name="McClelland M."/>
            <person name="Sanderson K.E."/>
            <person name="Spieth J."/>
            <person name="Clifton S.W."/>
            <person name="Latreille P."/>
            <person name="Courtney L."/>
            <person name="Porwollik S."/>
            <person name="Ali J."/>
            <person name="Dante M."/>
            <person name="Du F."/>
            <person name="Hou S."/>
            <person name="Layman D."/>
            <person name="Leonard S."/>
            <person name="Nguyen C."/>
            <person name="Scott K."/>
            <person name="Holmes A."/>
            <person name="Grewal N."/>
            <person name="Mulvaney E."/>
            <person name="Ryan E."/>
            <person name="Sun H."/>
            <person name="Florea L."/>
            <person name="Miller W."/>
            <person name="Stoneking T."/>
            <person name="Nhan M."/>
            <person name="Waterston R."/>
            <person name="Wilson R.K."/>
        </authorList>
    </citation>
    <scope>NUCLEOTIDE SEQUENCE [LARGE SCALE GENOMIC DNA]</scope>
    <source>
        <strain>LT2 / SGSC1412 / ATCC 700720</strain>
    </source>
</reference>
<evidence type="ECO:0000250" key="1"/>
<evidence type="ECO:0000255" key="2">
    <source>
        <dbReference type="HAMAP-Rule" id="MF_01017"/>
    </source>
</evidence>
<evidence type="ECO:0007829" key="3">
    <source>
        <dbReference type="PDB" id="7Q6N"/>
    </source>
</evidence>
<protein>
    <recommendedName>
        <fullName evidence="2">NAD(P)H dehydrogenase (quinone)</fullName>
        <ecNumber evidence="2">1.6.5.2</ecNumber>
    </recommendedName>
    <alternativeName>
        <fullName>Flavoprotein WrbA</fullName>
    </alternativeName>
    <alternativeName>
        <fullName evidence="2">NAD(P)H:quinone oxidoreductase</fullName>
        <shortName evidence="2">NQO</shortName>
    </alternativeName>
</protein>
<dbReference type="EC" id="1.6.5.2" evidence="2"/>
<dbReference type="EMBL" id="AE006468">
    <property type="protein sequence ID" value="AAL20051.1"/>
    <property type="molecule type" value="Genomic_DNA"/>
</dbReference>
<dbReference type="PDB" id="7Q6N">
    <property type="method" value="X-ray"/>
    <property type="resolution" value="2.33 A"/>
    <property type="chains" value="A/B/C/D=1-198"/>
</dbReference>
<dbReference type="PDBsum" id="7Q6N"/>
<dbReference type="SMR" id="Q8ZQ40"/>
<dbReference type="STRING" id="99287.STM1119"/>
<dbReference type="PaxDb" id="99287-STM1119"/>
<dbReference type="KEGG" id="stm:STM1119"/>
<dbReference type="PATRIC" id="fig|99287.12.peg.1184"/>
<dbReference type="HOGENOM" id="CLU_051402_0_2_6"/>
<dbReference type="OMA" id="KFADGNP"/>
<dbReference type="PhylomeDB" id="Q8ZQ40"/>
<dbReference type="BioCyc" id="SENT99287:STM1119-MONOMER"/>
<dbReference type="Proteomes" id="UP000001014">
    <property type="component" value="Chromosome"/>
</dbReference>
<dbReference type="GO" id="GO:0016020">
    <property type="term" value="C:membrane"/>
    <property type="evidence" value="ECO:0000318"/>
    <property type="project" value="GO_Central"/>
</dbReference>
<dbReference type="GO" id="GO:0050660">
    <property type="term" value="F:flavin adenine dinucleotide binding"/>
    <property type="evidence" value="ECO:0007669"/>
    <property type="project" value="UniProtKB-UniRule"/>
</dbReference>
<dbReference type="GO" id="GO:0010181">
    <property type="term" value="F:FMN binding"/>
    <property type="evidence" value="ECO:0007669"/>
    <property type="project" value="InterPro"/>
</dbReference>
<dbReference type="GO" id="GO:0051287">
    <property type="term" value="F:NAD binding"/>
    <property type="evidence" value="ECO:0007669"/>
    <property type="project" value="UniProtKB-UniRule"/>
</dbReference>
<dbReference type="GO" id="GO:0003955">
    <property type="term" value="F:NAD(P)H dehydrogenase (quinone) activity"/>
    <property type="evidence" value="ECO:0000318"/>
    <property type="project" value="GO_Central"/>
</dbReference>
<dbReference type="GO" id="GO:0050136">
    <property type="term" value="F:NADH:ubiquinone reductase (non-electrogenic) activity"/>
    <property type="evidence" value="ECO:0007669"/>
    <property type="project" value="RHEA"/>
</dbReference>
<dbReference type="GO" id="GO:0050661">
    <property type="term" value="F:NADP binding"/>
    <property type="evidence" value="ECO:0007669"/>
    <property type="project" value="UniProtKB-UniRule"/>
</dbReference>
<dbReference type="GO" id="GO:0008753">
    <property type="term" value="F:NADPH dehydrogenase (quinone) activity"/>
    <property type="evidence" value="ECO:0007669"/>
    <property type="project" value="RHEA"/>
</dbReference>
<dbReference type="FunFam" id="3.40.50.360:FF:000004">
    <property type="entry name" value="NAD(P)H dehydrogenase (quinone)"/>
    <property type="match status" value="1"/>
</dbReference>
<dbReference type="Gene3D" id="3.40.50.360">
    <property type="match status" value="1"/>
</dbReference>
<dbReference type="HAMAP" id="MF_01017">
    <property type="entry name" value="NQOR"/>
    <property type="match status" value="1"/>
</dbReference>
<dbReference type="InterPro" id="IPR008254">
    <property type="entry name" value="Flavodoxin/NO_synth"/>
</dbReference>
<dbReference type="InterPro" id="IPR029039">
    <property type="entry name" value="Flavoprotein-like_sf"/>
</dbReference>
<dbReference type="InterPro" id="IPR010089">
    <property type="entry name" value="Flavoprotein_WrbA-like"/>
</dbReference>
<dbReference type="InterPro" id="IPR005025">
    <property type="entry name" value="FMN_Rdtase-like_dom"/>
</dbReference>
<dbReference type="InterPro" id="IPR037513">
    <property type="entry name" value="NQO"/>
</dbReference>
<dbReference type="NCBIfam" id="TIGR01755">
    <property type="entry name" value="flav_wrbA"/>
    <property type="match status" value="1"/>
</dbReference>
<dbReference type="NCBIfam" id="NF002999">
    <property type="entry name" value="PRK03767.1"/>
    <property type="match status" value="1"/>
</dbReference>
<dbReference type="PANTHER" id="PTHR30546">
    <property type="entry name" value="FLAVODOXIN-RELATED PROTEIN WRBA-RELATED"/>
    <property type="match status" value="1"/>
</dbReference>
<dbReference type="PANTHER" id="PTHR30546:SF23">
    <property type="entry name" value="FLAVOPROTEIN-LIKE PROTEIN YCP4-RELATED"/>
    <property type="match status" value="1"/>
</dbReference>
<dbReference type="Pfam" id="PF03358">
    <property type="entry name" value="FMN_red"/>
    <property type="match status" value="1"/>
</dbReference>
<dbReference type="SUPFAM" id="SSF52218">
    <property type="entry name" value="Flavoproteins"/>
    <property type="match status" value="1"/>
</dbReference>
<dbReference type="PROSITE" id="PS50902">
    <property type="entry name" value="FLAVODOXIN_LIKE"/>
    <property type="match status" value="1"/>
</dbReference>
<sequence length="198" mass="20868">MAKILVLYYSMYGHIETMAHAVAEGAKKVDGAEVIIKRVPETMPPEIFAKAGGKTQNAPVATPQELADYDAIIFGTPTRFGNMSGQMRTFLDQTGGLWASGSLYGKLGSVFSSTGTGGGQEQTITSTWTTLAHHGMVIVPIGYAAQELFDVSQVRGGTPYGATTIAGGDGSRQPSQEELSIARYQGEYVAGLAVKLNG</sequence>
<comment type="catalytic activity">
    <reaction evidence="2">
        <text>a quinone + NADH + H(+) = a quinol + NAD(+)</text>
        <dbReference type="Rhea" id="RHEA:46160"/>
        <dbReference type="ChEBI" id="CHEBI:15378"/>
        <dbReference type="ChEBI" id="CHEBI:24646"/>
        <dbReference type="ChEBI" id="CHEBI:57540"/>
        <dbReference type="ChEBI" id="CHEBI:57945"/>
        <dbReference type="ChEBI" id="CHEBI:132124"/>
        <dbReference type="EC" id="1.6.5.2"/>
    </reaction>
</comment>
<comment type="catalytic activity">
    <reaction evidence="2">
        <text>a quinone + NADPH + H(+) = a quinol + NADP(+)</text>
        <dbReference type="Rhea" id="RHEA:46164"/>
        <dbReference type="ChEBI" id="CHEBI:15378"/>
        <dbReference type="ChEBI" id="CHEBI:24646"/>
        <dbReference type="ChEBI" id="CHEBI:57783"/>
        <dbReference type="ChEBI" id="CHEBI:58349"/>
        <dbReference type="ChEBI" id="CHEBI:132124"/>
        <dbReference type="EC" id="1.6.5.2"/>
    </reaction>
</comment>
<comment type="cofactor">
    <cofactor evidence="2">
        <name>FMN</name>
        <dbReference type="ChEBI" id="CHEBI:58210"/>
    </cofactor>
    <text evidence="2">Binds 1 FMN per monomer.</text>
</comment>
<comment type="similarity">
    <text evidence="2">Belongs to the WrbA family.</text>
</comment>